<accession>A5VXQ7</accession>
<gene>
    <name evidence="1" type="primary">rplN</name>
    <name type="ordered locus">Pput_0497</name>
</gene>
<evidence type="ECO:0000255" key="1">
    <source>
        <dbReference type="HAMAP-Rule" id="MF_01367"/>
    </source>
</evidence>
<evidence type="ECO:0000305" key="2"/>
<comment type="function">
    <text evidence="1">Binds to 23S rRNA. Forms part of two intersubunit bridges in the 70S ribosome.</text>
</comment>
<comment type="subunit">
    <text evidence="1">Part of the 50S ribosomal subunit. Forms a cluster with proteins L3 and L19. In the 70S ribosome, L14 and L19 interact and together make contacts with the 16S rRNA in bridges B5 and B8.</text>
</comment>
<comment type="similarity">
    <text evidence="1">Belongs to the universal ribosomal protein uL14 family.</text>
</comment>
<sequence>MIQTQSMLDVADNSGARRVMCIKVLGGSHRRYAGIGDIIKVTVKEAIPRGKVKKGQVMTAVVVRTRHGVRRADGSIIRFDGNAAVLLNNKQEPIGTRIFGPVTRELRTEKFMKIVSLAPEVL</sequence>
<proteinExistence type="inferred from homology"/>
<reference key="1">
    <citation type="submission" date="2007-05" db="EMBL/GenBank/DDBJ databases">
        <title>Complete sequence of Pseudomonas putida F1.</title>
        <authorList>
            <consortium name="US DOE Joint Genome Institute"/>
            <person name="Copeland A."/>
            <person name="Lucas S."/>
            <person name="Lapidus A."/>
            <person name="Barry K."/>
            <person name="Detter J.C."/>
            <person name="Glavina del Rio T."/>
            <person name="Hammon N."/>
            <person name="Israni S."/>
            <person name="Dalin E."/>
            <person name="Tice H."/>
            <person name="Pitluck S."/>
            <person name="Chain P."/>
            <person name="Malfatti S."/>
            <person name="Shin M."/>
            <person name="Vergez L."/>
            <person name="Schmutz J."/>
            <person name="Larimer F."/>
            <person name="Land M."/>
            <person name="Hauser L."/>
            <person name="Kyrpides N."/>
            <person name="Lykidis A."/>
            <person name="Parales R."/>
            <person name="Richardson P."/>
        </authorList>
    </citation>
    <scope>NUCLEOTIDE SEQUENCE [LARGE SCALE GENOMIC DNA]</scope>
    <source>
        <strain>ATCC 700007 / DSM 6899 / JCM 31910 / BCRC 17059 / LMG 24140 / F1</strain>
    </source>
</reference>
<feature type="chain" id="PRO_1000055679" description="Large ribosomal subunit protein uL14">
    <location>
        <begin position="1"/>
        <end position="122"/>
    </location>
</feature>
<dbReference type="EMBL" id="CP000712">
    <property type="protein sequence ID" value="ABQ76667.1"/>
    <property type="molecule type" value="Genomic_DNA"/>
</dbReference>
<dbReference type="SMR" id="A5VXQ7"/>
<dbReference type="KEGG" id="ppf:Pput_0497"/>
<dbReference type="eggNOG" id="COG0093">
    <property type="taxonomic scope" value="Bacteria"/>
</dbReference>
<dbReference type="HOGENOM" id="CLU_095071_2_1_6"/>
<dbReference type="GO" id="GO:0022625">
    <property type="term" value="C:cytosolic large ribosomal subunit"/>
    <property type="evidence" value="ECO:0007669"/>
    <property type="project" value="TreeGrafter"/>
</dbReference>
<dbReference type="GO" id="GO:0070180">
    <property type="term" value="F:large ribosomal subunit rRNA binding"/>
    <property type="evidence" value="ECO:0007669"/>
    <property type="project" value="TreeGrafter"/>
</dbReference>
<dbReference type="GO" id="GO:0003735">
    <property type="term" value="F:structural constituent of ribosome"/>
    <property type="evidence" value="ECO:0007669"/>
    <property type="project" value="InterPro"/>
</dbReference>
<dbReference type="GO" id="GO:0006412">
    <property type="term" value="P:translation"/>
    <property type="evidence" value="ECO:0007669"/>
    <property type="project" value="UniProtKB-UniRule"/>
</dbReference>
<dbReference type="CDD" id="cd00337">
    <property type="entry name" value="Ribosomal_uL14"/>
    <property type="match status" value="1"/>
</dbReference>
<dbReference type="FunFam" id="2.40.150.20:FF:000001">
    <property type="entry name" value="50S ribosomal protein L14"/>
    <property type="match status" value="1"/>
</dbReference>
<dbReference type="Gene3D" id="2.40.150.20">
    <property type="entry name" value="Ribosomal protein L14"/>
    <property type="match status" value="1"/>
</dbReference>
<dbReference type="HAMAP" id="MF_01367">
    <property type="entry name" value="Ribosomal_uL14"/>
    <property type="match status" value="1"/>
</dbReference>
<dbReference type="InterPro" id="IPR000218">
    <property type="entry name" value="Ribosomal_uL14"/>
</dbReference>
<dbReference type="InterPro" id="IPR005745">
    <property type="entry name" value="Ribosomal_uL14_bac-type"/>
</dbReference>
<dbReference type="InterPro" id="IPR019972">
    <property type="entry name" value="Ribosomal_uL14_CS"/>
</dbReference>
<dbReference type="InterPro" id="IPR036853">
    <property type="entry name" value="Ribosomal_uL14_sf"/>
</dbReference>
<dbReference type="NCBIfam" id="TIGR01067">
    <property type="entry name" value="rplN_bact"/>
    <property type="match status" value="1"/>
</dbReference>
<dbReference type="PANTHER" id="PTHR11761">
    <property type="entry name" value="50S/60S RIBOSOMAL PROTEIN L14/L23"/>
    <property type="match status" value="1"/>
</dbReference>
<dbReference type="PANTHER" id="PTHR11761:SF3">
    <property type="entry name" value="LARGE RIBOSOMAL SUBUNIT PROTEIN UL14M"/>
    <property type="match status" value="1"/>
</dbReference>
<dbReference type="Pfam" id="PF00238">
    <property type="entry name" value="Ribosomal_L14"/>
    <property type="match status" value="1"/>
</dbReference>
<dbReference type="SMART" id="SM01374">
    <property type="entry name" value="Ribosomal_L14"/>
    <property type="match status" value="1"/>
</dbReference>
<dbReference type="SUPFAM" id="SSF50193">
    <property type="entry name" value="Ribosomal protein L14"/>
    <property type="match status" value="1"/>
</dbReference>
<dbReference type="PROSITE" id="PS00049">
    <property type="entry name" value="RIBOSOMAL_L14"/>
    <property type="match status" value="1"/>
</dbReference>
<keyword id="KW-0687">Ribonucleoprotein</keyword>
<keyword id="KW-0689">Ribosomal protein</keyword>
<keyword id="KW-0694">RNA-binding</keyword>
<keyword id="KW-0699">rRNA-binding</keyword>
<protein>
    <recommendedName>
        <fullName evidence="1">Large ribosomal subunit protein uL14</fullName>
    </recommendedName>
    <alternativeName>
        <fullName evidence="2">50S ribosomal protein L14</fullName>
    </alternativeName>
</protein>
<organism>
    <name type="scientific">Pseudomonas putida (strain ATCC 700007 / DSM 6899 / JCM 31910 / BCRC 17059 / LMG 24140 / F1)</name>
    <dbReference type="NCBI Taxonomy" id="351746"/>
    <lineage>
        <taxon>Bacteria</taxon>
        <taxon>Pseudomonadati</taxon>
        <taxon>Pseudomonadota</taxon>
        <taxon>Gammaproteobacteria</taxon>
        <taxon>Pseudomonadales</taxon>
        <taxon>Pseudomonadaceae</taxon>
        <taxon>Pseudomonas</taxon>
    </lineage>
</organism>
<name>RL14_PSEP1</name>